<feature type="chain" id="PRO_0000256819" description="Serine/threonine-protein kinase ppk18">
    <location>
        <begin position="1"/>
        <end position="1318"/>
    </location>
</feature>
<feature type="domain" description="Protein kinase" evidence="1">
    <location>
        <begin position="566"/>
        <end position="934"/>
    </location>
</feature>
<feature type="domain" description="AGC-kinase C-terminal" evidence="3">
    <location>
        <begin position="935"/>
        <end position="1044"/>
    </location>
</feature>
<feature type="domain" description="Response regulatory" evidence="2">
    <location>
        <begin position="1200"/>
        <end position="1316"/>
    </location>
</feature>
<feature type="region of interest" description="Disordered" evidence="5">
    <location>
        <begin position="431"/>
        <end position="485"/>
    </location>
</feature>
<feature type="region of interest" description="Disordered" evidence="5">
    <location>
        <begin position="968"/>
        <end position="1022"/>
    </location>
</feature>
<feature type="region of interest" description="Disordered" evidence="5">
    <location>
        <begin position="1058"/>
        <end position="1078"/>
    </location>
</feature>
<feature type="region of interest" description="Disordered" evidence="5">
    <location>
        <begin position="1091"/>
        <end position="1127"/>
    </location>
</feature>
<feature type="compositionally biased region" description="Low complexity" evidence="5">
    <location>
        <begin position="462"/>
        <end position="479"/>
    </location>
</feature>
<feature type="compositionally biased region" description="Polar residues" evidence="5">
    <location>
        <begin position="972"/>
        <end position="1000"/>
    </location>
</feature>
<feature type="compositionally biased region" description="Polar residues" evidence="5">
    <location>
        <begin position="1091"/>
        <end position="1115"/>
    </location>
</feature>
<feature type="compositionally biased region" description="Basic and acidic residues" evidence="5">
    <location>
        <begin position="1116"/>
        <end position="1127"/>
    </location>
</feature>
<feature type="active site" description="Proton acceptor" evidence="1 4">
    <location>
        <position position="690"/>
    </location>
</feature>
<feature type="binding site" evidence="1">
    <location>
        <begin position="572"/>
        <end position="580"/>
    </location>
    <ligand>
        <name>ATP</name>
        <dbReference type="ChEBI" id="CHEBI:30616"/>
    </ligand>
</feature>
<feature type="binding site" evidence="1">
    <location>
        <position position="595"/>
    </location>
    <ligand>
        <name>ATP</name>
        <dbReference type="ChEBI" id="CHEBI:30616"/>
    </ligand>
</feature>
<evidence type="ECO:0000255" key="1">
    <source>
        <dbReference type="PROSITE-ProRule" id="PRU00159"/>
    </source>
</evidence>
<evidence type="ECO:0000255" key="2">
    <source>
        <dbReference type="PROSITE-ProRule" id="PRU00169"/>
    </source>
</evidence>
<evidence type="ECO:0000255" key="3">
    <source>
        <dbReference type="PROSITE-ProRule" id="PRU00618"/>
    </source>
</evidence>
<evidence type="ECO:0000255" key="4">
    <source>
        <dbReference type="PROSITE-ProRule" id="PRU10027"/>
    </source>
</evidence>
<evidence type="ECO:0000256" key="5">
    <source>
        <dbReference type="SAM" id="MobiDB-lite"/>
    </source>
</evidence>
<evidence type="ECO:0000269" key="6">
    <source>
    </source>
</evidence>
<name>PPK18_SCHPO</name>
<keyword id="KW-0067">ATP-binding</keyword>
<keyword id="KW-0963">Cytoplasm</keyword>
<keyword id="KW-0418">Kinase</keyword>
<keyword id="KW-0547">Nucleotide-binding</keyword>
<keyword id="KW-0597">Phosphoprotein</keyword>
<keyword id="KW-1185">Reference proteome</keyword>
<keyword id="KW-0723">Serine/threonine-protein kinase</keyword>
<keyword id="KW-0808">Transferase</keyword>
<accession>Q8TFG6</accession>
<protein>
    <recommendedName>
        <fullName>Serine/threonine-protein kinase ppk18</fullName>
        <ecNumber>2.7.11.1</ecNumber>
    </recommendedName>
</protein>
<organism>
    <name type="scientific">Schizosaccharomyces pombe (strain 972 / ATCC 24843)</name>
    <name type="common">Fission yeast</name>
    <dbReference type="NCBI Taxonomy" id="284812"/>
    <lineage>
        <taxon>Eukaryota</taxon>
        <taxon>Fungi</taxon>
        <taxon>Dikarya</taxon>
        <taxon>Ascomycota</taxon>
        <taxon>Taphrinomycotina</taxon>
        <taxon>Schizosaccharomycetes</taxon>
        <taxon>Schizosaccharomycetales</taxon>
        <taxon>Schizosaccharomycetaceae</taxon>
        <taxon>Schizosaccharomyces</taxon>
    </lineage>
</organism>
<gene>
    <name type="primary">ppk18</name>
    <name type="ORF">SPAPB18E9.02c</name>
</gene>
<reference key="1">
    <citation type="journal article" date="2002" name="Nature">
        <title>The genome sequence of Schizosaccharomyces pombe.</title>
        <authorList>
            <person name="Wood V."/>
            <person name="Gwilliam R."/>
            <person name="Rajandream M.A."/>
            <person name="Lyne M.H."/>
            <person name="Lyne R."/>
            <person name="Stewart A."/>
            <person name="Sgouros J.G."/>
            <person name="Peat N."/>
            <person name="Hayles J."/>
            <person name="Baker S.G."/>
            <person name="Basham D."/>
            <person name="Bowman S."/>
            <person name="Brooks K."/>
            <person name="Brown D."/>
            <person name="Brown S."/>
            <person name="Chillingworth T."/>
            <person name="Churcher C.M."/>
            <person name="Collins M."/>
            <person name="Connor R."/>
            <person name="Cronin A."/>
            <person name="Davis P."/>
            <person name="Feltwell T."/>
            <person name="Fraser A."/>
            <person name="Gentles S."/>
            <person name="Goble A."/>
            <person name="Hamlin N."/>
            <person name="Harris D.E."/>
            <person name="Hidalgo J."/>
            <person name="Hodgson G."/>
            <person name="Holroyd S."/>
            <person name="Hornsby T."/>
            <person name="Howarth S."/>
            <person name="Huckle E.J."/>
            <person name="Hunt S."/>
            <person name="Jagels K."/>
            <person name="James K.D."/>
            <person name="Jones L."/>
            <person name="Jones M."/>
            <person name="Leather S."/>
            <person name="McDonald S."/>
            <person name="McLean J."/>
            <person name="Mooney P."/>
            <person name="Moule S."/>
            <person name="Mungall K.L."/>
            <person name="Murphy L.D."/>
            <person name="Niblett D."/>
            <person name="Odell C."/>
            <person name="Oliver K."/>
            <person name="O'Neil S."/>
            <person name="Pearson D."/>
            <person name="Quail M.A."/>
            <person name="Rabbinowitsch E."/>
            <person name="Rutherford K.M."/>
            <person name="Rutter S."/>
            <person name="Saunders D."/>
            <person name="Seeger K."/>
            <person name="Sharp S."/>
            <person name="Skelton J."/>
            <person name="Simmonds M.N."/>
            <person name="Squares R."/>
            <person name="Squares S."/>
            <person name="Stevens K."/>
            <person name="Taylor K."/>
            <person name="Taylor R.G."/>
            <person name="Tivey A."/>
            <person name="Walsh S.V."/>
            <person name="Warren T."/>
            <person name="Whitehead S."/>
            <person name="Woodward J.R."/>
            <person name="Volckaert G."/>
            <person name="Aert R."/>
            <person name="Robben J."/>
            <person name="Grymonprez B."/>
            <person name="Weltjens I."/>
            <person name="Vanstreels E."/>
            <person name="Rieger M."/>
            <person name="Schaefer M."/>
            <person name="Mueller-Auer S."/>
            <person name="Gabel C."/>
            <person name="Fuchs M."/>
            <person name="Duesterhoeft A."/>
            <person name="Fritzc C."/>
            <person name="Holzer E."/>
            <person name="Moestl D."/>
            <person name="Hilbert H."/>
            <person name="Borzym K."/>
            <person name="Langer I."/>
            <person name="Beck A."/>
            <person name="Lehrach H."/>
            <person name="Reinhardt R."/>
            <person name="Pohl T.M."/>
            <person name="Eger P."/>
            <person name="Zimmermann W."/>
            <person name="Wedler H."/>
            <person name="Wambutt R."/>
            <person name="Purnelle B."/>
            <person name="Goffeau A."/>
            <person name="Cadieu E."/>
            <person name="Dreano S."/>
            <person name="Gloux S."/>
            <person name="Lelaure V."/>
            <person name="Mottier S."/>
            <person name="Galibert F."/>
            <person name="Aves S.J."/>
            <person name="Xiang Z."/>
            <person name="Hunt C."/>
            <person name="Moore K."/>
            <person name="Hurst S.M."/>
            <person name="Lucas M."/>
            <person name="Rochet M."/>
            <person name="Gaillardin C."/>
            <person name="Tallada V.A."/>
            <person name="Garzon A."/>
            <person name="Thode G."/>
            <person name="Daga R.R."/>
            <person name="Cruzado L."/>
            <person name="Jimenez J."/>
            <person name="Sanchez M."/>
            <person name="del Rey F."/>
            <person name="Benito J."/>
            <person name="Dominguez A."/>
            <person name="Revuelta J.L."/>
            <person name="Moreno S."/>
            <person name="Armstrong J."/>
            <person name="Forsburg S.L."/>
            <person name="Cerutti L."/>
            <person name="Lowe T."/>
            <person name="McCombie W.R."/>
            <person name="Paulsen I."/>
            <person name="Potashkin J."/>
            <person name="Shpakovski G.V."/>
            <person name="Ussery D."/>
            <person name="Barrell B.G."/>
            <person name="Nurse P."/>
        </authorList>
    </citation>
    <scope>NUCLEOTIDE SEQUENCE [LARGE SCALE GENOMIC DNA]</scope>
    <source>
        <strain>972 / ATCC 24843</strain>
    </source>
</reference>
<reference key="2">
    <citation type="journal article" date="2011" name="Science">
        <title>Comparative functional genomics of the fission yeasts.</title>
        <authorList>
            <person name="Rhind N."/>
            <person name="Chen Z."/>
            <person name="Yassour M."/>
            <person name="Thompson D.A."/>
            <person name="Haas B.J."/>
            <person name="Habib N."/>
            <person name="Wapinski I."/>
            <person name="Roy S."/>
            <person name="Lin M.F."/>
            <person name="Heiman D.I."/>
            <person name="Young S.K."/>
            <person name="Furuya K."/>
            <person name="Guo Y."/>
            <person name="Pidoux A."/>
            <person name="Chen H.M."/>
            <person name="Robbertse B."/>
            <person name="Goldberg J.M."/>
            <person name="Aoki K."/>
            <person name="Bayne E.H."/>
            <person name="Berlin A.M."/>
            <person name="Desjardins C.A."/>
            <person name="Dobbs E."/>
            <person name="Dukaj L."/>
            <person name="Fan L."/>
            <person name="FitzGerald M.G."/>
            <person name="French C."/>
            <person name="Gujja S."/>
            <person name="Hansen K."/>
            <person name="Keifenheim D."/>
            <person name="Levin J.Z."/>
            <person name="Mosher R.A."/>
            <person name="Mueller C.A."/>
            <person name="Pfiffner J."/>
            <person name="Priest M."/>
            <person name="Russ C."/>
            <person name="Smialowska A."/>
            <person name="Swoboda P."/>
            <person name="Sykes S.M."/>
            <person name="Vaughn M."/>
            <person name="Vengrova S."/>
            <person name="Yoder R."/>
            <person name="Zeng Q."/>
            <person name="Allshire R."/>
            <person name="Baulcombe D."/>
            <person name="Birren B.W."/>
            <person name="Brown W."/>
            <person name="Ekwall K."/>
            <person name="Kellis M."/>
            <person name="Leatherwood J."/>
            <person name="Levin H."/>
            <person name="Margalit H."/>
            <person name="Martienssen R."/>
            <person name="Nieduszynski C.A."/>
            <person name="Spatafora J.W."/>
            <person name="Friedman N."/>
            <person name="Dalgaard J.Z."/>
            <person name="Baumann P."/>
            <person name="Niki H."/>
            <person name="Regev A."/>
            <person name="Nusbaum C."/>
        </authorList>
    </citation>
    <scope>REVISION OF GENE MODEL</scope>
</reference>
<reference key="3">
    <citation type="journal article" date="2005" name="Eukaryot. Cell">
        <title>Systematic deletion analysis of fission yeast protein kinases.</title>
        <authorList>
            <person name="Bimbo A."/>
            <person name="Jia Y."/>
            <person name="Poh S.L."/>
            <person name="Karuturi R.K.M."/>
            <person name="den Elzen N."/>
            <person name="Peng X."/>
            <person name="Zheng L."/>
            <person name="O'Connell M."/>
            <person name="Liu E.T."/>
            <person name="Balasubramanian M.K."/>
            <person name="Liu J."/>
        </authorList>
    </citation>
    <scope>IDENTIFICATION</scope>
</reference>
<reference key="4">
    <citation type="journal article" date="2006" name="Nat. Biotechnol.">
        <title>ORFeome cloning and global analysis of protein localization in the fission yeast Schizosaccharomyces pombe.</title>
        <authorList>
            <person name="Matsuyama A."/>
            <person name="Arai R."/>
            <person name="Yashiroda Y."/>
            <person name="Shirai A."/>
            <person name="Kamata A."/>
            <person name="Sekido S."/>
            <person name="Kobayashi Y."/>
            <person name="Hashimoto A."/>
            <person name="Hamamoto M."/>
            <person name="Hiraoka Y."/>
            <person name="Horinouchi S."/>
            <person name="Yoshida M."/>
        </authorList>
    </citation>
    <scope>SUBCELLULAR LOCATION [LARGE SCALE ANALYSIS]</scope>
</reference>
<sequence length="1318" mass="146995">MVMQERNSNEDNKVNHGIDNIYVLELDLDGSVLFASTNFSQITGISSLELTGKPAALLSSDQEIFNAAIEQLLDDDSHSVKIHTVISKLPSLEENVFVQDEEMELQSKSVELDCVGVLIRDPLTSRPSHTLWVLQPLKPTRITRQEIGQQLTETLGFGAQLLAQHLEKLQTVPSTDSLPPFETVLCRVCDHEIQNWYFEHHTELCLLIHHAEARAQEANDLLNEQRNALQSLLDSLDDQIEPDVSYLGVPLAAVLPSSITSSAKSNSRSSLSQKIRNYISNMLFDAISYTDSCLAIHLPFIPESTTREDNQPFSEIRLLSPASEVFNAKTLSWCLPHIDDPGLQLMFENTDALVKKKLDAINRLSNIIYYSERVRCEIEDQVQTIIEQSIQVDGYDEPLSTTTPTLIEPIQETLMTQSPIIECEPFNTVKPSVSPEEVHDISQFNHRNDPPITAASVDSSNSFSVHRSSTNHSSTNSGSPNLSRRNNLAIPIASRRKSVSAVNTLYGVGSSYTSESFPFSKLTVPVERNSFRETESPKPFLSRQIGISTLSSNISSGKGTPSIQDYEIIKPISKGTFGTVYLSRKNTTGEIYAIKVLRKVDMISKNQVANVKAERAVLMAQEESAFVAKLYYAFQSRDYLYLVMEFMNGGDCASLLKSLYTIPESWAKIYIAEVALGLEHLHRLGIIHRDIKPDNILMSITGHLKLADFGLSQLGLTTRQLRLQKGKNNILSPPSFQSPTALGDPGDNIASSPLILPTSVSAFSYDEKSQKQKTELATFTTYKEDDTTTTTRTSIDSISSKYLESPVDSQKVNRTPNLQSVPFFRQPDAPKRFVGTPDYLAPETLRGSTQDDMVDWWALGCVLFEFLFGYPPFHAETPEKVFENILANNIAWPDLEMYPCSEEALDLINGFLQPNPERRLGFSDINEIKEHPFFNGINWDDIFSHEAPFIPAPETPLDTAYFDSRGAGAAESNMSSSVNSGEEVSKDNNVSQERGSQFLRSSHGRSRERSTSARRSRRFSEANSEFDEFGPFSYKNLSVLERANRNAIEKIRSEIAGKLHISPPDPHIGYTPGSDMPSAKLYDQQLTLSPSLMTNQGSNFSSTDSTPRKSINSSDVESRSKTDGPKSMHDLIKQLHMRKHSSHTNQSTGSSESDDLFNLDLPISNLETSYPFKIEEGQASPLSSPLSKTPPFFSSSVPLKALICVSKLNLFSELIKLLKSYKFQVSIVTDEDKMLRTLMADEKFSIIFLQLDLTRVSGVSILKIVRSSNCANRNTPAIALTPTRIDINAAIPRMFDGRLYLPINAFLLRGYIARLCNK</sequence>
<dbReference type="EC" id="2.7.11.1"/>
<dbReference type="EMBL" id="CU329670">
    <property type="protein sequence ID" value="CAD27468.2"/>
    <property type="molecule type" value="Genomic_DNA"/>
</dbReference>
<dbReference type="RefSeq" id="NP_001018270.2">
    <property type="nucleotide sequence ID" value="NM_001019825.2"/>
</dbReference>
<dbReference type="SMR" id="Q8TFG6"/>
<dbReference type="BioGRID" id="280611">
    <property type="interactions" value="7"/>
</dbReference>
<dbReference type="FunCoup" id="Q8TFG6">
    <property type="interactions" value="391"/>
</dbReference>
<dbReference type="STRING" id="284812.Q8TFG6"/>
<dbReference type="iPTMnet" id="Q8TFG6"/>
<dbReference type="PaxDb" id="4896-SPAPB18E9.02c.1"/>
<dbReference type="EnsemblFungi" id="SPAPB18E9.02c.1">
    <property type="protein sequence ID" value="SPAPB18E9.02c.1:pep"/>
    <property type="gene ID" value="SPAPB18E9.02c"/>
</dbReference>
<dbReference type="GeneID" id="3361535"/>
<dbReference type="KEGG" id="spo:3361535"/>
<dbReference type="PomBase" id="SPAPB18E9.02c">
    <property type="gene designation" value="ppk18"/>
</dbReference>
<dbReference type="VEuPathDB" id="FungiDB:SPAPB18E9.02c"/>
<dbReference type="eggNOG" id="KOG0605">
    <property type="taxonomic scope" value="Eukaryota"/>
</dbReference>
<dbReference type="HOGENOM" id="CLU_000709_4_1_1"/>
<dbReference type="InParanoid" id="Q8TFG6"/>
<dbReference type="OMA" id="AKLYYAF"/>
<dbReference type="Reactome" id="R-SPO-2465910">
    <property type="pathway name" value="MASTL Facilitates Mitotic Progression"/>
</dbReference>
<dbReference type="PRO" id="PR:Q8TFG6"/>
<dbReference type="Proteomes" id="UP000002485">
    <property type="component" value="Chromosome I"/>
</dbReference>
<dbReference type="GO" id="GO:0005737">
    <property type="term" value="C:cytoplasm"/>
    <property type="evidence" value="ECO:0000318"/>
    <property type="project" value="GO_Central"/>
</dbReference>
<dbReference type="GO" id="GO:0005829">
    <property type="term" value="C:cytosol"/>
    <property type="evidence" value="ECO:0007005"/>
    <property type="project" value="PomBase"/>
</dbReference>
<dbReference type="GO" id="GO:0005634">
    <property type="term" value="C:nucleus"/>
    <property type="evidence" value="ECO:0000318"/>
    <property type="project" value="GO_Central"/>
</dbReference>
<dbReference type="GO" id="GO:0005524">
    <property type="term" value="F:ATP binding"/>
    <property type="evidence" value="ECO:0000255"/>
    <property type="project" value="PomBase"/>
</dbReference>
<dbReference type="GO" id="GO:0106310">
    <property type="term" value="F:protein serine kinase activity"/>
    <property type="evidence" value="ECO:0007669"/>
    <property type="project" value="RHEA"/>
</dbReference>
<dbReference type="GO" id="GO:0004674">
    <property type="term" value="F:protein serine/threonine kinase activity"/>
    <property type="evidence" value="ECO:0000314"/>
    <property type="project" value="PomBase"/>
</dbReference>
<dbReference type="GO" id="GO:0035556">
    <property type="term" value="P:intracellular signal transduction"/>
    <property type="evidence" value="ECO:0000315"/>
    <property type="project" value="PomBase"/>
</dbReference>
<dbReference type="GO" id="GO:1905287">
    <property type="term" value="P:positive regulation of G2/M transition of mitotic cell cycle involved in cellular response to nitrogen starvation"/>
    <property type="evidence" value="ECO:0000315"/>
    <property type="project" value="PomBase"/>
</dbReference>
<dbReference type="GO" id="GO:1900237">
    <property type="term" value="P:positive regulation of induction of conjugation with cellular fusion"/>
    <property type="evidence" value="ECO:0000315"/>
    <property type="project" value="PomBase"/>
</dbReference>
<dbReference type="GO" id="GO:1902472">
    <property type="term" value="P:regulation of mitotic cytokinesis, division site positioning"/>
    <property type="evidence" value="ECO:0000316"/>
    <property type="project" value="PomBase"/>
</dbReference>
<dbReference type="FunFam" id="1.10.510.10:FF:000340">
    <property type="entry name" value="Serine threonine protein kinase"/>
    <property type="match status" value="1"/>
</dbReference>
<dbReference type="FunFam" id="3.30.200.20:FF:001008">
    <property type="entry name" value="Serine/threonine-protein kinase cek1"/>
    <property type="match status" value="1"/>
</dbReference>
<dbReference type="Gene3D" id="3.40.50.2300">
    <property type="match status" value="1"/>
</dbReference>
<dbReference type="Gene3D" id="3.30.200.20">
    <property type="entry name" value="Phosphorylase Kinase, domain 1"/>
    <property type="match status" value="2"/>
</dbReference>
<dbReference type="Gene3D" id="1.10.510.10">
    <property type="entry name" value="Transferase(Phosphotransferase) domain 1"/>
    <property type="match status" value="2"/>
</dbReference>
<dbReference type="InterPro" id="IPR000961">
    <property type="entry name" value="AGC-kinase_C"/>
</dbReference>
<dbReference type="InterPro" id="IPR011006">
    <property type="entry name" value="CheY-like_superfamily"/>
</dbReference>
<dbReference type="InterPro" id="IPR011009">
    <property type="entry name" value="Kinase-like_dom_sf"/>
</dbReference>
<dbReference type="InterPro" id="IPR000014">
    <property type="entry name" value="PAS"/>
</dbReference>
<dbReference type="InterPro" id="IPR000719">
    <property type="entry name" value="Prot_kinase_dom"/>
</dbReference>
<dbReference type="InterPro" id="IPR008271">
    <property type="entry name" value="Ser/Thr_kinase_AS"/>
</dbReference>
<dbReference type="InterPro" id="IPR050236">
    <property type="entry name" value="Ser_Thr_kinase_AGC"/>
</dbReference>
<dbReference type="InterPro" id="IPR001789">
    <property type="entry name" value="Sig_transdc_resp-reg_receiver"/>
</dbReference>
<dbReference type="PANTHER" id="PTHR24356">
    <property type="entry name" value="SERINE/THREONINE-PROTEIN KINASE"/>
    <property type="match status" value="1"/>
</dbReference>
<dbReference type="PANTHER" id="PTHR24356:SF1">
    <property type="entry name" value="SERINE_THREONINE-PROTEIN KINASE GREATWALL"/>
    <property type="match status" value="1"/>
</dbReference>
<dbReference type="Pfam" id="PF00069">
    <property type="entry name" value="Pkinase"/>
    <property type="match status" value="2"/>
</dbReference>
<dbReference type="SMART" id="SM00220">
    <property type="entry name" value="S_TKc"/>
    <property type="match status" value="1"/>
</dbReference>
<dbReference type="SUPFAM" id="SSF52172">
    <property type="entry name" value="CheY-like"/>
    <property type="match status" value="1"/>
</dbReference>
<dbReference type="SUPFAM" id="SSF56112">
    <property type="entry name" value="Protein kinase-like (PK-like)"/>
    <property type="match status" value="1"/>
</dbReference>
<dbReference type="PROSITE" id="PS51285">
    <property type="entry name" value="AGC_KINASE_CTER"/>
    <property type="match status" value="1"/>
</dbReference>
<dbReference type="PROSITE" id="PS50011">
    <property type="entry name" value="PROTEIN_KINASE_DOM"/>
    <property type="match status" value="1"/>
</dbReference>
<dbReference type="PROSITE" id="PS00108">
    <property type="entry name" value="PROTEIN_KINASE_ST"/>
    <property type="match status" value="1"/>
</dbReference>
<dbReference type="PROSITE" id="PS50110">
    <property type="entry name" value="RESPONSE_REGULATORY"/>
    <property type="match status" value="1"/>
</dbReference>
<proteinExistence type="inferred from homology"/>
<comment type="catalytic activity">
    <reaction>
        <text>L-seryl-[protein] + ATP = O-phospho-L-seryl-[protein] + ADP + H(+)</text>
        <dbReference type="Rhea" id="RHEA:17989"/>
        <dbReference type="Rhea" id="RHEA-COMP:9863"/>
        <dbReference type="Rhea" id="RHEA-COMP:11604"/>
        <dbReference type="ChEBI" id="CHEBI:15378"/>
        <dbReference type="ChEBI" id="CHEBI:29999"/>
        <dbReference type="ChEBI" id="CHEBI:30616"/>
        <dbReference type="ChEBI" id="CHEBI:83421"/>
        <dbReference type="ChEBI" id="CHEBI:456216"/>
        <dbReference type="EC" id="2.7.11.1"/>
    </reaction>
</comment>
<comment type="catalytic activity">
    <reaction>
        <text>L-threonyl-[protein] + ATP = O-phospho-L-threonyl-[protein] + ADP + H(+)</text>
        <dbReference type="Rhea" id="RHEA:46608"/>
        <dbReference type="Rhea" id="RHEA-COMP:11060"/>
        <dbReference type="Rhea" id="RHEA-COMP:11605"/>
        <dbReference type="ChEBI" id="CHEBI:15378"/>
        <dbReference type="ChEBI" id="CHEBI:30013"/>
        <dbReference type="ChEBI" id="CHEBI:30616"/>
        <dbReference type="ChEBI" id="CHEBI:61977"/>
        <dbReference type="ChEBI" id="CHEBI:456216"/>
        <dbReference type="EC" id="2.7.11.1"/>
    </reaction>
</comment>
<comment type="subcellular location">
    <subcellularLocation>
        <location evidence="6">Cytoplasm</location>
    </subcellularLocation>
</comment>
<comment type="similarity">
    <text evidence="1">Belongs to the protein kinase superfamily. Ser/Thr protein kinase family.</text>
</comment>